<protein>
    <recommendedName>
        <fullName evidence="3">Selenoprotein K</fullName>
        <shortName evidence="3">SelK</shortName>
    </recommendedName>
</protein>
<reference key="1">
    <citation type="submission" date="2005-06" db="EMBL/GenBank/DDBJ databases">
        <title>DNA sequences of macaque genes expressed in brain or testis and its evolutionary implications.</title>
        <authorList>
            <consortium name="International consortium for macaque cDNA sequencing and analysis"/>
        </authorList>
    </citation>
    <scope>NUCLEOTIDE SEQUENCE [LARGE SCALE MRNA]</scope>
    <source>
        <tissue>Testis</tissue>
    </source>
</reference>
<proteinExistence type="inferred from homology"/>
<keyword id="KW-0106">Calcium</keyword>
<keyword id="KW-0109">Calcium transport</keyword>
<keyword id="KW-1003">Cell membrane</keyword>
<keyword id="KW-0256">Endoplasmic reticulum</keyword>
<keyword id="KW-0406">Ion transport</keyword>
<keyword id="KW-0472">Membrane</keyword>
<keyword id="KW-1185">Reference proteome</keyword>
<keyword id="KW-0712">Selenocysteine</keyword>
<keyword id="KW-0812">Transmembrane</keyword>
<keyword id="KW-1133">Transmembrane helix</keyword>
<keyword id="KW-0813">Transport</keyword>
<keyword id="KW-0832">Ubl conjugation</keyword>
<name>SELK_MACFA</name>
<accession>Q4R8M1</accession>
<sequence length="94" mass="10645">MVYISNGQVLDSRSQSPWRLSLITDFFWGIAEFVVLFFKTLLQQDVKKRRSYGNSSDSRYDDGRGPPGNPPRRMGRINHLRGPSPPPMAGGUGR</sequence>
<comment type="function">
    <text evidence="2 3">Required for Ca(2+) flux in immune cells and plays a role in T-cell proliferation and in T-cell and neutrophil migration (By similarity). Involved in endoplasmic reticulum-associated degradation (ERAD) of soluble glycosylated proteins (By similarity). Required for palmitoylation and cell surface expression of CD36 and involved in macrophage uptake of low-density lipoprotein and in foam cell formation (By similarity). Together with ZDHHC6, required for palmitoylation of ITPR1 in immune cells, leading to regulate ITPR1 stability and function. Plays a role in protection of cells from ER stress-induced apoptosis. Protects cells from oxidative stress when overexpressed in cardiomyocytes (By similarity).</text>
</comment>
<comment type="subunit">
    <text evidence="3">Interacts with DERL1, DERL2, DERL3 and SELENOS. The SELENOK-SELENOS complex interacts with VCP. Interacts with ZDHHC6.</text>
</comment>
<comment type="subcellular location">
    <subcellularLocation>
        <location evidence="3">Endoplasmic reticulum membrane</location>
        <topology evidence="4">Single-pass membrane protein</topology>
    </subcellularLocation>
    <subcellularLocation>
        <location evidence="3">Cell membrane</location>
        <topology evidence="4">Single-pass membrane protein</topology>
    </subcellularLocation>
    <text evidence="3">Probably mainly localized in the ER.</text>
</comment>
<comment type="PTM">
    <text evidence="2">Cleaved by CAPN2/m-calpain in resting macrophages but not in activated macrophages. Macrophage activation up-regulates expression of the calpain inhibitor CAST/calpastatin, resulting in inhibition of CAPN2 activity (By similarity).</text>
</comment>
<comment type="PTM">
    <text evidence="3">Truncated SELENOK proteins produced by failed UGA/Sec decoding are ubiquitinated by the CRL2(KLHDC2) complex, which recognizes the diglycine (Gly-Gly) at the C-terminus of truncated SELENOK proteins.</text>
</comment>
<comment type="similarity">
    <text evidence="6">Belongs to the selenoprotein K family.</text>
</comment>
<comment type="sequence caution" evidence="6">
    <conflict type="erroneous termination">
        <sequence resource="EMBL-CDS" id="BAE00551"/>
    </conflict>
    <text>Truncated C-terminus.</text>
</comment>
<gene>
    <name evidence="3" type="primary">SELENOK</name>
    <name evidence="3" type="synonym">SELK</name>
    <name evidence="7" type="ORF">QtsA-12089</name>
</gene>
<feature type="chain" id="PRO_0000290203" description="Selenoprotein K">
    <location>
        <begin position="1"/>
        <end position="94"/>
    </location>
</feature>
<feature type="transmembrane region" description="Helical" evidence="4">
    <location>
        <begin position="20"/>
        <end position="42"/>
    </location>
</feature>
<feature type="region of interest" description="Disordered" evidence="5">
    <location>
        <begin position="48"/>
        <end position="94"/>
    </location>
</feature>
<feature type="site" description="Cleavage; by CAPN2" evidence="1">
    <location>
        <begin position="81"/>
        <end position="82"/>
    </location>
</feature>
<feature type="non-standard amino acid" description="Selenocysteine" evidence="1">
    <location>
        <position position="92"/>
    </location>
</feature>
<dbReference type="EMBL" id="AB168431">
    <property type="protein sequence ID" value="BAE00551.1"/>
    <property type="status" value="ALT_SEQ"/>
    <property type="molecule type" value="mRNA"/>
</dbReference>
<dbReference type="SMR" id="Q4R8M1"/>
<dbReference type="STRING" id="9541.ENSMFAP00000020314"/>
<dbReference type="Proteomes" id="UP000233100">
    <property type="component" value="Unplaced"/>
</dbReference>
<dbReference type="GO" id="GO:0005783">
    <property type="term" value="C:endoplasmic reticulum"/>
    <property type="evidence" value="ECO:0000250"/>
    <property type="project" value="UniProtKB"/>
</dbReference>
<dbReference type="GO" id="GO:0005789">
    <property type="term" value="C:endoplasmic reticulum membrane"/>
    <property type="evidence" value="ECO:0000250"/>
    <property type="project" value="UniProtKB"/>
</dbReference>
<dbReference type="GO" id="GO:0005794">
    <property type="term" value="C:Golgi apparatus"/>
    <property type="evidence" value="ECO:0007669"/>
    <property type="project" value="TreeGrafter"/>
</dbReference>
<dbReference type="GO" id="GO:0005886">
    <property type="term" value="C:plasma membrane"/>
    <property type="evidence" value="ECO:0007669"/>
    <property type="project" value="UniProtKB-SubCell"/>
</dbReference>
<dbReference type="GO" id="GO:0006816">
    <property type="term" value="P:calcium ion transport"/>
    <property type="evidence" value="ECO:0007669"/>
    <property type="project" value="UniProtKB-KW"/>
</dbReference>
<dbReference type="GO" id="GO:0032469">
    <property type="term" value="P:endoplasmic reticulum calcium ion homeostasis"/>
    <property type="evidence" value="ECO:0007669"/>
    <property type="project" value="TreeGrafter"/>
</dbReference>
<dbReference type="GO" id="GO:0018345">
    <property type="term" value="P:protein palmitoylation"/>
    <property type="evidence" value="ECO:0000250"/>
    <property type="project" value="UniProtKB"/>
</dbReference>
<dbReference type="InterPro" id="IPR024491">
    <property type="entry name" value="Se_SelK/SelG"/>
</dbReference>
<dbReference type="PANTHER" id="PTHR16875">
    <property type="entry name" value="SELENOPROTEIN K"/>
    <property type="match status" value="1"/>
</dbReference>
<dbReference type="PANTHER" id="PTHR16875:SF0">
    <property type="entry name" value="SELENOPROTEIN K"/>
    <property type="match status" value="1"/>
</dbReference>
<dbReference type="Pfam" id="PF10961">
    <property type="entry name" value="SelK_SelG"/>
    <property type="match status" value="1"/>
</dbReference>
<evidence type="ECO:0000250" key="1"/>
<evidence type="ECO:0000250" key="2">
    <source>
        <dbReference type="UniProtKB" id="Q9JLJ1"/>
    </source>
</evidence>
<evidence type="ECO:0000250" key="3">
    <source>
        <dbReference type="UniProtKB" id="Q9Y6D0"/>
    </source>
</evidence>
<evidence type="ECO:0000255" key="4"/>
<evidence type="ECO:0000256" key="5">
    <source>
        <dbReference type="SAM" id="MobiDB-lite"/>
    </source>
</evidence>
<evidence type="ECO:0000305" key="6"/>
<evidence type="ECO:0000312" key="7">
    <source>
        <dbReference type="EMBL" id="BAE00551.1"/>
    </source>
</evidence>
<organism>
    <name type="scientific">Macaca fascicularis</name>
    <name type="common">Crab-eating macaque</name>
    <name type="synonym">Cynomolgus monkey</name>
    <dbReference type="NCBI Taxonomy" id="9541"/>
    <lineage>
        <taxon>Eukaryota</taxon>
        <taxon>Metazoa</taxon>
        <taxon>Chordata</taxon>
        <taxon>Craniata</taxon>
        <taxon>Vertebrata</taxon>
        <taxon>Euteleostomi</taxon>
        <taxon>Mammalia</taxon>
        <taxon>Eutheria</taxon>
        <taxon>Euarchontoglires</taxon>
        <taxon>Primates</taxon>
        <taxon>Haplorrhini</taxon>
        <taxon>Catarrhini</taxon>
        <taxon>Cercopithecidae</taxon>
        <taxon>Cercopithecinae</taxon>
        <taxon>Macaca</taxon>
    </lineage>
</organism>